<reference key="1">
    <citation type="journal article" date="2008" name="BMC Genomics">
        <title>The missing link: Bordetella petrii is endowed with both the metabolic versatility of environmental bacteria and virulence traits of pathogenic Bordetellae.</title>
        <authorList>
            <person name="Gross R."/>
            <person name="Guzman C.A."/>
            <person name="Sebaihia M."/>
            <person name="Martin dos Santos V.A.P."/>
            <person name="Pieper D.H."/>
            <person name="Koebnik R."/>
            <person name="Lechner M."/>
            <person name="Bartels D."/>
            <person name="Buhrmester J."/>
            <person name="Choudhuri J.V."/>
            <person name="Ebensen T."/>
            <person name="Gaigalat L."/>
            <person name="Herrmann S."/>
            <person name="Khachane A.N."/>
            <person name="Larisch C."/>
            <person name="Link S."/>
            <person name="Linke B."/>
            <person name="Meyer F."/>
            <person name="Mormann S."/>
            <person name="Nakunst D."/>
            <person name="Rueckert C."/>
            <person name="Schneiker-Bekel S."/>
            <person name="Schulze K."/>
            <person name="Voerholter F.-J."/>
            <person name="Yevsa T."/>
            <person name="Engle J.T."/>
            <person name="Goldman W.E."/>
            <person name="Puehler A."/>
            <person name="Goebel U.B."/>
            <person name="Goesmann A."/>
            <person name="Bloecker H."/>
            <person name="Kaiser O."/>
            <person name="Martinez-Arias R."/>
        </authorList>
    </citation>
    <scope>NUCLEOTIDE SEQUENCE [LARGE SCALE GENOMIC DNA]</scope>
    <source>
        <strain>ATCC BAA-461 / DSM 12804 / CCUG 43448</strain>
    </source>
</reference>
<keyword id="KW-0067">ATP-binding</keyword>
<keyword id="KW-0119">Carbohydrate metabolism</keyword>
<keyword id="KW-0418">Kinase</keyword>
<keyword id="KW-0547">Nucleotide-binding</keyword>
<keyword id="KW-0808">Transferase</keyword>
<sequence length="378" mass="39493">MTRSGGPRVSTPGRLFIGLMSGTSLDGADGVLVRLAAGQAPQVLATAGLPMPDALRAELLALNRSGADELHRAALAAQALARVYADAVQALLQQARQPATAVTAIGVHGQTVRHRPELGYTLQLNAPALLAELTGIDVVADFRSRDVAAGGQGAPLVPPFHAAMFAAPHERAVLNLGGIANLTLLVPGQPPRGFDTGPANVLLDTWCRRHTGQPYDDNGRWAATGQVQAALLEHLLADEPWLALPPPKSTGRDLFDAAWLDQRLQSYDGPAPAPQDVQATLQRFTARTVADALEAAAPATRDVLVCGGGARNQGLKAELAMCLQRPVQATDAAGVPAQWVEAMAFAWLAQAFLDRTPAGVPQVTGARGPRVLGALYPA</sequence>
<dbReference type="EC" id="2.7.1.170" evidence="1"/>
<dbReference type="EMBL" id="AM902716">
    <property type="protein sequence ID" value="CAP40942.1"/>
    <property type="molecule type" value="Genomic_DNA"/>
</dbReference>
<dbReference type="SMR" id="A9I280"/>
<dbReference type="STRING" id="94624.Bpet0610"/>
<dbReference type="KEGG" id="bpt:Bpet0610"/>
<dbReference type="eggNOG" id="COG2377">
    <property type="taxonomic scope" value="Bacteria"/>
</dbReference>
<dbReference type="UniPathway" id="UPA00343"/>
<dbReference type="UniPathway" id="UPA00544"/>
<dbReference type="Proteomes" id="UP000001225">
    <property type="component" value="Chromosome"/>
</dbReference>
<dbReference type="GO" id="GO:0005524">
    <property type="term" value="F:ATP binding"/>
    <property type="evidence" value="ECO:0007669"/>
    <property type="project" value="UniProtKB-UniRule"/>
</dbReference>
<dbReference type="GO" id="GO:0016301">
    <property type="term" value="F:kinase activity"/>
    <property type="evidence" value="ECO:0007669"/>
    <property type="project" value="UniProtKB-KW"/>
</dbReference>
<dbReference type="GO" id="GO:0016773">
    <property type="term" value="F:phosphotransferase activity, alcohol group as acceptor"/>
    <property type="evidence" value="ECO:0007669"/>
    <property type="project" value="UniProtKB-UniRule"/>
</dbReference>
<dbReference type="GO" id="GO:0097175">
    <property type="term" value="P:1,6-anhydro-N-acetyl-beta-muramic acid catabolic process"/>
    <property type="evidence" value="ECO:0007669"/>
    <property type="project" value="UniProtKB-UniRule"/>
</dbReference>
<dbReference type="GO" id="GO:0006040">
    <property type="term" value="P:amino sugar metabolic process"/>
    <property type="evidence" value="ECO:0007669"/>
    <property type="project" value="InterPro"/>
</dbReference>
<dbReference type="GO" id="GO:0009254">
    <property type="term" value="P:peptidoglycan turnover"/>
    <property type="evidence" value="ECO:0007669"/>
    <property type="project" value="UniProtKB-UniRule"/>
</dbReference>
<dbReference type="CDD" id="cd24050">
    <property type="entry name" value="ASKHA_NBD_ANMK"/>
    <property type="match status" value="1"/>
</dbReference>
<dbReference type="Gene3D" id="3.30.420.40">
    <property type="match status" value="2"/>
</dbReference>
<dbReference type="HAMAP" id="MF_01270">
    <property type="entry name" value="AnhMurNAc_kinase"/>
    <property type="match status" value="1"/>
</dbReference>
<dbReference type="InterPro" id="IPR005338">
    <property type="entry name" value="Anhydro_N_Ac-Mur_kinase"/>
</dbReference>
<dbReference type="InterPro" id="IPR043129">
    <property type="entry name" value="ATPase_NBD"/>
</dbReference>
<dbReference type="NCBIfam" id="NF007139">
    <property type="entry name" value="PRK09585.1-3"/>
    <property type="match status" value="1"/>
</dbReference>
<dbReference type="PANTHER" id="PTHR30605">
    <property type="entry name" value="ANHYDRO-N-ACETYLMURAMIC ACID KINASE"/>
    <property type="match status" value="1"/>
</dbReference>
<dbReference type="PANTHER" id="PTHR30605:SF0">
    <property type="entry name" value="ANHYDRO-N-ACETYLMURAMIC ACID KINASE"/>
    <property type="match status" value="1"/>
</dbReference>
<dbReference type="Pfam" id="PF03702">
    <property type="entry name" value="AnmK"/>
    <property type="match status" value="1"/>
</dbReference>
<dbReference type="SUPFAM" id="SSF53067">
    <property type="entry name" value="Actin-like ATPase domain"/>
    <property type="match status" value="1"/>
</dbReference>
<name>ANMK_BORPD</name>
<proteinExistence type="inferred from homology"/>
<evidence type="ECO:0000255" key="1">
    <source>
        <dbReference type="HAMAP-Rule" id="MF_01270"/>
    </source>
</evidence>
<accession>A9I280</accession>
<feature type="chain" id="PRO_1000165152" description="Anhydro-N-acetylmuramic acid kinase">
    <location>
        <begin position="1"/>
        <end position="378"/>
    </location>
</feature>
<feature type="binding site" evidence="1">
    <location>
        <begin position="22"/>
        <end position="29"/>
    </location>
    <ligand>
        <name>ATP</name>
        <dbReference type="ChEBI" id="CHEBI:30616"/>
    </ligand>
</feature>
<organism>
    <name type="scientific">Bordetella petrii (strain ATCC BAA-461 / DSM 12804 / CCUG 43448)</name>
    <dbReference type="NCBI Taxonomy" id="340100"/>
    <lineage>
        <taxon>Bacteria</taxon>
        <taxon>Pseudomonadati</taxon>
        <taxon>Pseudomonadota</taxon>
        <taxon>Betaproteobacteria</taxon>
        <taxon>Burkholderiales</taxon>
        <taxon>Alcaligenaceae</taxon>
        <taxon>Bordetella</taxon>
    </lineage>
</organism>
<comment type="function">
    <text evidence="1">Catalyzes the specific phosphorylation of 1,6-anhydro-N-acetylmuramic acid (anhMurNAc) with the simultaneous cleavage of the 1,6-anhydro ring, generating MurNAc-6-P. Is required for the utilization of anhMurNAc either imported from the medium or derived from its own cell wall murein, and thus plays a role in cell wall recycling.</text>
</comment>
<comment type="catalytic activity">
    <reaction evidence="1">
        <text>1,6-anhydro-N-acetyl-beta-muramate + ATP + H2O = N-acetyl-D-muramate 6-phosphate + ADP + H(+)</text>
        <dbReference type="Rhea" id="RHEA:24952"/>
        <dbReference type="ChEBI" id="CHEBI:15377"/>
        <dbReference type="ChEBI" id="CHEBI:15378"/>
        <dbReference type="ChEBI" id="CHEBI:30616"/>
        <dbReference type="ChEBI" id="CHEBI:58690"/>
        <dbReference type="ChEBI" id="CHEBI:58722"/>
        <dbReference type="ChEBI" id="CHEBI:456216"/>
        <dbReference type="EC" id="2.7.1.170"/>
    </reaction>
</comment>
<comment type="pathway">
    <text evidence="1">Amino-sugar metabolism; 1,6-anhydro-N-acetylmuramate degradation.</text>
</comment>
<comment type="pathway">
    <text evidence="1">Cell wall biogenesis; peptidoglycan recycling.</text>
</comment>
<comment type="similarity">
    <text evidence="1">Belongs to the anhydro-N-acetylmuramic acid kinase family.</text>
</comment>
<gene>
    <name evidence="1" type="primary">anmK</name>
    <name type="ordered locus">Bpet0610</name>
</gene>
<protein>
    <recommendedName>
        <fullName evidence="1">Anhydro-N-acetylmuramic acid kinase</fullName>
        <ecNumber evidence="1">2.7.1.170</ecNumber>
    </recommendedName>
    <alternativeName>
        <fullName evidence="1">AnhMurNAc kinase</fullName>
    </alternativeName>
</protein>